<reference key="1">
    <citation type="journal article" date="2011" name="J. Bacteriol.">
        <title>Complete genome sequence of the plant growth-promoting endophyte Burkholderia phytofirmans strain PsJN.</title>
        <authorList>
            <person name="Weilharter A."/>
            <person name="Mitter B."/>
            <person name="Shin M.V."/>
            <person name="Chain P.S."/>
            <person name="Nowak J."/>
            <person name="Sessitsch A."/>
        </authorList>
    </citation>
    <scope>NUCLEOTIDE SEQUENCE [LARGE SCALE GENOMIC DNA]</scope>
    <source>
        <strain>DSM 17436 / LMG 22146 / PsJN</strain>
    </source>
</reference>
<protein>
    <recommendedName>
        <fullName evidence="2">Translation initiation factor IF-2</fullName>
    </recommendedName>
</protein>
<sequence length="986" mass="105634">MASNNVAQFAAELKMPAGVLLEQLQAAGVTKASEDDSLSETDKARLLDHLRKSHGSTDADKRKITLTKRHTSEIKQSDATGKARTIQVEVRKKRTFVRRDETSAENGDASNHVAEADVDDLELQRREEEARHEAELLEKQAQELKARQEQLEREEAERQAREAAAEAERRRAEEEAAKKRAAAEAAAREQAQAAKPAQAAQPAAAKAEPVAAKAAEPAVAKQSEQDDERAAAERAAQREAAKKAEDAARQAAEKARAEQEQIAKRRAAAEAEARAIREMMNTPRKAQVKAPEPAPKPAEPAKAAEAKGTLHKPARPAGEAPSRPAAKKPAAAAPAATTTPSAGDKKKPGGGKGGWQDDAAKRRGIKTRGDTSGGVDRGWRGGPKGRGKHQDQNTTFQAPTEPIVREVHVPETITVADLAHKMAVKASEVIKSMMKLGQMVTINQMLDQETAMIIVEELGHHAVAAKLDDPEAMLVEGEISDAESLPRPPVVTVMGHVDHGKTSLLDYIRRAKVAAGEAGGITQHIGAYHVETPRGVITFLDTPGHEAFTAMRARGAKATDIVILVVAADDGVMPQTKEAIAHAKAGGVPLVVAINKIDKPDANPDRVKQELVAEGVVPEEYGGDSPFVSVSAKTGAGIDDLLENVLLQAEVLELKAPVEAPAKGLVIEAKLDKGKGPVATILVQSGTLNRGDVVLAGSAYGRVRAMLDETGKPTKSAGPSIPVEIQGLSEVPQAGEEVIVMPDDRKAREVALFRQGKFRDVKLAKQQAAKLENMLEQMGEGEVAYMPLIVKADVQGSQEALVQSLLKLSTDEVRVQIVHGAVGGISESDVNLATASKAVIIGFNTRADAQARKLAEANGVDIRYYNIIYDAVDEVKAAMSGMLAPEKREIVTGTVEVRQVFKVPKIGAVAGCMVTDGFVKRSSSVRVLRNNVVIFTGELDSLKRFKDDVKEVRQGFECGMSIKNFNDIVEGDQFEVFEITEVARTL</sequence>
<comment type="function">
    <text evidence="2">One of the essential components for the initiation of protein synthesis. Protects formylmethionyl-tRNA from spontaneous hydrolysis and promotes its binding to the 30S ribosomal subunits. Also involved in the hydrolysis of GTP during the formation of the 70S ribosomal complex.</text>
</comment>
<comment type="subcellular location">
    <subcellularLocation>
        <location evidence="2">Cytoplasm</location>
    </subcellularLocation>
</comment>
<comment type="similarity">
    <text evidence="2">Belongs to the TRAFAC class translation factor GTPase superfamily. Classic translation factor GTPase family. IF-2 subfamily.</text>
</comment>
<evidence type="ECO:0000250" key="1"/>
<evidence type="ECO:0000255" key="2">
    <source>
        <dbReference type="HAMAP-Rule" id="MF_00100"/>
    </source>
</evidence>
<evidence type="ECO:0000256" key="3">
    <source>
        <dbReference type="SAM" id="MobiDB-lite"/>
    </source>
</evidence>
<organism>
    <name type="scientific">Paraburkholderia phytofirmans (strain DSM 17436 / LMG 22146 / PsJN)</name>
    <name type="common">Burkholderia phytofirmans</name>
    <dbReference type="NCBI Taxonomy" id="398527"/>
    <lineage>
        <taxon>Bacteria</taxon>
        <taxon>Pseudomonadati</taxon>
        <taxon>Pseudomonadota</taxon>
        <taxon>Betaproteobacteria</taxon>
        <taxon>Burkholderiales</taxon>
        <taxon>Burkholderiaceae</taxon>
        <taxon>Paraburkholderia</taxon>
    </lineage>
</organism>
<keyword id="KW-0963">Cytoplasm</keyword>
<keyword id="KW-0342">GTP-binding</keyword>
<keyword id="KW-0396">Initiation factor</keyword>
<keyword id="KW-0547">Nucleotide-binding</keyword>
<keyword id="KW-0648">Protein biosynthesis</keyword>
<accession>B2T381</accession>
<gene>
    <name evidence="2" type="primary">infB</name>
    <name type="ordered locus">Bphyt_1632</name>
</gene>
<dbReference type="EMBL" id="CP001052">
    <property type="protein sequence ID" value="ACD16042.1"/>
    <property type="molecule type" value="Genomic_DNA"/>
</dbReference>
<dbReference type="RefSeq" id="WP_012432653.1">
    <property type="nucleotide sequence ID" value="NC_010681.1"/>
</dbReference>
<dbReference type="SMR" id="B2T381"/>
<dbReference type="STRING" id="398527.Bphyt_1632"/>
<dbReference type="KEGG" id="bpy:Bphyt_1632"/>
<dbReference type="eggNOG" id="COG0532">
    <property type="taxonomic scope" value="Bacteria"/>
</dbReference>
<dbReference type="HOGENOM" id="CLU_006301_6_0_4"/>
<dbReference type="OrthoDB" id="9811804at2"/>
<dbReference type="Proteomes" id="UP000001739">
    <property type="component" value="Chromosome 1"/>
</dbReference>
<dbReference type="GO" id="GO:0005829">
    <property type="term" value="C:cytosol"/>
    <property type="evidence" value="ECO:0007669"/>
    <property type="project" value="TreeGrafter"/>
</dbReference>
<dbReference type="GO" id="GO:0005525">
    <property type="term" value="F:GTP binding"/>
    <property type="evidence" value="ECO:0007669"/>
    <property type="project" value="UniProtKB-KW"/>
</dbReference>
<dbReference type="GO" id="GO:0003924">
    <property type="term" value="F:GTPase activity"/>
    <property type="evidence" value="ECO:0007669"/>
    <property type="project" value="UniProtKB-UniRule"/>
</dbReference>
<dbReference type="GO" id="GO:0003743">
    <property type="term" value="F:translation initiation factor activity"/>
    <property type="evidence" value="ECO:0007669"/>
    <property type="project" value="UniProtKB-UniRule"/>
</dbReference>
<dbReference type="CDD" id="cd01887">
    <property type="entry name" value="IF2_eIF5B"/>
    <property type="match status" value="1"/>
</dbReference>
<dbReference type="CDD" id="cd03702">
    <property type="entry name" value="IF2_mtIF2_II"/>
    <property type="match status" value="1"/>
</dbReference>
<dbReference type="CDD" id="cd03692">
    <property type="entry name" value="mtIF2_IVc"/>
    <property type="match status" value="1"/>
</dbReference>
<dbReference type="FunFam" id="2.40.30.10:FF:000007">
    <property type="entry name" value="Translation initiation factor IF-2"/>
    <property type="match status" value="1"/>
</dbReference>
<dbReference type="FunFam" id="2.40.30.10:FF:000008">
    <property type="entry name" value="Translation initiation factor IF-2"/>
    <property type="match status" value="1"/>
</dbReference>
<dbReference type="FunFam" id="3.40.50.10050:FF:000001">
    <property type="entry name" value="Translation initiation factor IF-2"/>
    <property type="match status" value="1"/>
</dbReference>
<dbReference type="FunFam" id="3.40.50.300:FF:000019">
    <property type="entry name" value="Translation initiation factor IF-2"/>
    <property type="match status" value="1"/>
</dbReference>
<dbReference type="Gene3D" id="3.40.50.300">
    <property type="entry name" value="P-loop containing nucleotide triphosphate hydrolases"/>
    <property type="match status" value="1"/>
</dbReference>
<dbReference type="Gene3D" id="3.30.56.50">
    <property type="entry name" value="Putative DNA-binding domain, N-terminal subdomain of bacterial translation initiation factor IF2"/>
    <property type="match status" value="1"/>
</dbReference>
<dbReference type="Gene3D" id="2.40.30.10">
    <property type="entry name" value="Translation factors"/>
    <property type="match status" value="2"/>
</dbReference>
<dbReference type="Gene3D" id="3.40.50.10050">
    <property type="entry name" value="Translation initiation factor IF- 2, domain 3"/>
    <property type="match status" value="1"/>
</dbReference>
<dbReference type="HAMAP" id="MF_00100_B">
    <property type="entry name" value="IF_2_B"/>
    <property type="match status" value="1"/>
</dbReference>
<dbReference type="InterPro" id="IPR009061">
    <property type="entry name" value="DNA-bd_dom_put_sf"/>
</dbReference>
<dbReference type="InterPro" id="IPR053905">
    <property type="entry name" value="EF-G-like_DII"/>
</dbReference>
<dbReference type="InterPro" id="IPR013575">
    <property type="entry name" value="IF2_assoc_dom_bac"/>
</dbReference>
<dbReference type="InterPro" id="IPR044145">
    <property type="entry name" value="IF2_II"/>
</dbReference>
<dbReference type="InterPro" id="IPR006847">
    <property type="entry name" value="IF2_N"/>
</dbReference>
<dbReference type="InterPro" id="IPR027417">
    <property type="entry name" value="P-loop_NTPase"/>
</dbReference>
<dbReference type="InterPro" id="IPR005225">
    <property type="entry name" value="Small_GTP-bd"/>
</dbReference>
<dbReference type="InterPro" id="IPR000795">
    <property type="entry name" value="T_Tr_GTP-bd_dom"/>
</dbReference>
<dbReference type="InterPro" id="IPR000178">
    <property type="entry name" value="TF_IF2_bacterial-like"/>
</dbReference>
<dbReference type="InterPro" id="IPR015760">
    <property type="entry name" value="TIF_IF2"/>
</dbReference>
<dbReference type="InterPro" id="IPR023115">
    <property type="entry name" value="TIF_IF2_dom3"/>
</dbReference>
<dbReference type="InterPro" id="IPR036925">
    <property type="entry name" value="TIF_IF2_dom3_sf"/>
</dbReference>
<dbReference type="InterPro" id="IPR009000">
    <property type="entry name" value="Transl_B-barrel_sf"/>
</dbReference>
<dbReference type="NCBIfam" id="TIGR00487">
    <property type="entry name" value="IF-2"/>
    <property type="match status" value="1"/>
</dbReference>
<dbReference type="NCBIfam" id="TIGR00231">
    <property type="entry name" value="small_GTP"/>
    <property type="match status" value="1"/>
</dbReference>
<dbReference type="PANTHER" id="PTHR43381:SF5">
    <property type="entry name" value="TR-TYPE G DOMAIN-CONTAINING PROTEIN"/>
    <property type="match status" value="1"/>
</dbReference>
<dbReference type="PANTHER" id="PTHR43381">
    <property type="entry name" value="TRANSLATION INITIATION FACTOR IF-2-RELATED"/>
    <property type="match status" value="1"/>
</dbReference>
<dbReference type="Pfam" id="PF22042">
    <property type="entry name" value="EF-G_D2"/>
    <property type="match status" value="1"/>
</dbReference>
<dbReference type="Pfam" id="PF00009">
    <property type="entry name" value="GTP_EFTU"/>
    <property type="match status" value="1"/>
</dbReference>
<dbReference type="Pfam" id="PF11987">
    <property type="entry name" value="IF-2"/>
    <property type="match status" value="1"/>
</dbReference>
<dbReference type="Pfam" id="PF08364">
    <property type="entry name" value="IF2_assoc"/>
    <property type="match status" value="1"/>
</dbReference>
<dbReference type="Pfam" id="PF04760">
    <property type="entry name" value="IF2_N"/>
    <property type="match status" value="2"/>
</dbReference>
<dbReference type="SUPFAM" id="SSF52156">
    <property type="entry name" value="Initiation factor IF2/eIF5b, domain 3"/>
    <property type="match status" value="1"/>
</dbReference>
<dbReference type="SUPFAM" id="SSF52540">
    <property type="entry name" value="P-loop containing nucleoside triphosphate hydrolases"/>
    <property type="match status" value="1"/>
</dbReference>
<dbReference type="SUPFAM" id="SSF46955">
    <property type="entry name" value="Putative DNA-binding domain"/>
    <property type="match status" value="1"/>
</dbReference>
<dbReference type="SUPFAM" id="SSF50447">
    <property type="entry name" value="Translation proteins"/>
    <property type="match status" value="2"/>
</dbReference>
<dbReference type="PROSITE" id="PS51722">
    <property type="entry name" value="G_TR_2"/>
    <property type="match status" value="1"/>
</dbReference>
<dbReference type="PROSITE" id="PS01176">
    <property type="entry name" value="IF2"/>
    <property type="match status" value="1"/>
</dbReference>
<proteinExistence type="inferred from homology"/>
<feature type="chain" id="PRO_1000093766" description="Translation initiation factor IF-2">
    <location>
        <begin position="1"/>
        <end position="986"/>
    </location>
</feature>
<feature type="domain" description="tr-type G">
    <location>
        <begin position="486"/>
        <end position="655"/>
    </location>
</feature>
<feature type="region of interest" description="Disordered" evidence="3">
    <location>
        <begin position="95"/>
        <end position="394"/>
    </location>
</feature>
<feature type="region of interest" description="G1" evidence="1">
    <location>
        <begin position="495"/>
        <end position="502"/>
    </location>
</feature>
<feature type="region of interest" description="G2" evidence="1">
    <location>
        <begin position="520"/>
        <end position="524"/>
    </location>
</feature>
<feature type="region of interest" description="G3" evidence="1">
    <location>
        <begin position="541"/>
        <end position="544"/>
    </location>
</feature>
<feature type="region of interest" description="G4" evidence="1">
    <location>
        <begin position="595"/>
        <end position="598"/>
    </location>
</feature>
<feature type="region of interest" description="G5" evidence="1">
    <location>
        <begin position="631"/>
        <end position="633"/>
    </location>
</feature>
<feature type="compositionally biased region" description="Basic and acidic residues" evidence="3">
    <location>
        <begin position="122"/>
        <end position="182"/>
    </location>
</feature>
<feature type="compositionally biased region" description="Low complexity" evidence="3">
    <location>
        <begin position="183"/>
        <end position="222"/>
    </location>
</feature>
<feature type="compositionally biased region" description="Basic and acidic residues" evidence="3">
    <location>
        <begin position="228"/>
        <end position="277"/>
    </location>
</feature>
<feature type="compositionally biased region" description="Low complexity" evidence="3">
    <location>
        <begin position="320"/>
        <end position="342"/>
    </location>
</feature>
<feature type="compositionally biased region" description="Gly residues" evidence="3">
    <location>
        <begin position="371"/>
        <end position="384"/>
    </location>
</feature>
<feature type="binding site" evidence="2">
    <location>
        <begin position="495"/>
        <end position="502"/>
    </location>
    <ligand>
        <name>GTP</name>
        <dbReference type="ChEBI" id="CHEBI:37565"/>
    </ligand>
</feature>
<feature type="binding site" evidence="2">
    <location>
        <begin position="541"/>
        <end position="545"/>
    </location>
    <ligand>
        <name>GTP</name>
        <dbReference type="ChEBI" id="CHEBI:37565"/>
    </ligand>
</feature>
<feature type="binding site" evidence="2">
    <location>
        <begin position="595"/>
        <end position="598"/>
    </location>
    <ligand>
        <name>GTP</name>
        <dbReference type="ChEBI" id="CHEBI:37565"/>
    </ligand>
</feature>
<name>IF2_PARPJ</name>